<sequence>MFTGSIVAIVTPMDEKGNVCRASLKKLIDYHVASGTSAIVSVGTTGESATLNHDEHADVVMMTLELADGRIPVIAGTGANATAEAISLTQRFNDSGIVGCLTVTPYYNRPSQEGLYQHFKAIAEHTDLPQILYNVPSRTGCDLLPETVGRLAKVKNIIGIKEATGNLTRVNQIKELVSDDFVLLSGDDASALDFMQLGGHGVISVTANVAARDMAQMCKLAAEGHFAEARVINQRLMPLHNKLFVEPNPIPVKWACKELGLVATDTLRLPMTPITDSGRETVRAALKHAGLL</sequence>
<name>DAPA_ECO57</name>
<keyword id="KW-0028">Amino-acid biosynthesis</keyword>
<keyword id="KW-0963">Cytoplasm</keyword>
<keyword id="KW-0220">Diaminopimelate biosynthesis</keyword>
<keyword id="KW-0456">Lyase</keyword>
<keyword id="KW-0457">Lysine biosynthesis</keyword>
<keyword id="KW-1185">Reference proteome</keyword>
<keyword id="KW-0704">Schiff base</keyword>
<comment type="function">
    <text evidence="1">Catalyzes the condensation of (S)-aspartate-beta-semialdehyde [(S)-ASA] and pyruvate to 4-hydroxy-tetrahydrodipicolinate (HTPA).</text>
</comment>
<comment type="catalytic activity">
    <reaction evidence="1">
        <text>L-aspartate 4-semialdehyde + pyruvate = (2S,4S)-4-hydroxy-2,3,4,5-tetrahydrodipicolinate + H2O + H(+)</text>
        <dbReference type="Rhea" id="RHEA:34171"/>
        <dbReference type="ChEBI" id="CHEBI:15361"/>
        <dbReference type="ChEBI" id="CHEBI:15377"/>
        <dbReference type="ChEBI" id="CHEBI:15378"/>
        <dbReference type="ChEBI" id="CHEBI:67139"/>
        <dbReference type="ChEBI" id="CHEBI:537519"/>
        <dbReference type="EC" id="4.3.3.7"/>
    </reaction>
</comment>
<comment type="pathway">
    <text evidence="1">Amino-acid biosynthesis; L-lysine biosynthesis via DAP pathway; (S)-tetrahydrodipicolinate from L-aspartate: step 3/4.</text>
</comment>
<comment type="subunit">
    <text evidence="1">Homotetramer; dimer of dimers.</text>
</comment>
<comment type="subcellular location">
    <subcellularLocation>
        <location evidence="1">Cytoplasm</location>
    </subcellularLocation>
</comment>
<comment type="similarity">
    <text evidence="1">Belongs to the DapA family.</text>
</comment>
<comment type="caution">
    <text evidence="2">Was originally thought to be a dihydrodipicolinate synthase (DHDPS), catalyzing the condensation of (S)-aspartate-beta-semialdehyde [(S)-ASA] and pyruvate to dihydrodipicolinate (DHDP). However, it was shown in E.coli that the product of the enzymatic reaction is not dihydrodipicolinate but in fact (4S)-4-hydroxy-2,3,4,5-tetrahydro-(2S)-dipicolinic acid (HTPA), and that the consecutive dehydration reaction leading to DHDP is not spontaneous but catalyzed by DapB.</text>
</comment>
<dbReference type="EC" id="4.3.3.7" evidence="1"/>
<dbReference type="EMBL" id="AE005174">
    <property type="protein sequence ID" value="AAG57588.1"/>
    <property type="molecule type" value="Genomic_DNA"/>
</dbReference>
<dbReference type="EMBL" id="BA000007">
    <property type="protein sequence ID" value="BAB36763.1"/>
    <property type="molecule type" value="Genomic_DNA"/>
</dbReference>
<dbReference type="PIR" id="D91046">
    <property type="entry name" value="D91046"/>
</dbReference>
<dbReference type="PIR" id="H85890">
    <property type="entry name" value="H85890"/>
</dbReference>
<dbReference type="RefSeq" id="NP_311367.1">
    <property type="nucleotide sequence ID" value="NC_002695.1"/>
</dbReference>
<dbReference type="RefSeq" id="WP_001295469.1">
    <property type="nucleotide sequence ID" value="NZ_VOAI01000001.1"/>
</dbReference>
<dbReference type="SMR" id="P63944"/>
<dbReference type="STRING" id="155864.Z3737"/>
<dbReference type="GeneID" id="915253"/>
<dbReference type="GeneID" id="93774660"/>
<dbReference type="KEGG" id="ece:Z3737"/>
<dbReference type="KEGG" id="ecs:ECs_3340"/>
<dbReference type="PATRIC" id="fig|386585.9.peg.3489"/>
<dbReference type="eggNOG" id="COG0329">
    <property type="taxonomic scope" value="Bacteria"/>
</dbReference>
<dbReference type="HOGENOM" id="CLU_049343_7_1_6"/>
<dbReference type="OMA" id="GMDACVP"/>
<dbReference type="SABIO-RK" id="P63944"/>
<dbReference type="UniPathway" id="UPA00034">
    <property type="reaction ID" value="UER00017"/>
</dbReference>
<dbReference type="Proteomes" id="UP000000558">
    <property type="component" value="Chromosome"/>
</dbReference>
<dbReference type="Proteomes" id="UP000002519">
    <property type="component" value="Chromosome"/>
</dbReference>
<dbReference type="GO" id="GO:0005829">
    <property type="term" value="C:cytosol"/>
    <property type="evidence" value="ECO:0007669"/>
    <property type="project" value="TreeGrafter"/>
</dbReference>
<dbReference type="GO" id="GO:0008840">
    <property type="term" value="F:4-hydroxy-tetrahydrodipicolinate synthase activity"/>
    <property type="evidence" value="ECO:0007669"/>
    <property type="project" value="UniProtKB-UniRule"/>
</dbReference>
<dbReference type="GO" id="GO:0019877">
    <property type="term" value="P:diaminopimelate biosynthetic process"/>
    <property type="evidence" value="ECO:0007669"/>
    <property type="project" value="UniProtKB-UniRule"/>
</dbReference>
<dbReference type="GO" id="GO:0009089">
    <property type="term" value="P:lysine biosynthetic process via diaminopimelate"/>
    <property type="evidence" value="ECO:0007669"/>
    <property type="project" value="UniProtKB-UniRule"/>
</dbReference>
<dbReference type="CDD" id="cd00950">
    <property type="entry name" value="DHDPS"/>
    <property type="match status" value="1"/>
</dbReference>
<dbReference type="FunFam" id="3.20.20.70:FF:000046">
    <property type="entry name" value="4-hydroxy-tetrahydrodipicolinate synthase"/>
    <property type="match status" value="1"/>
</dbReference>
<dbReference type="Gene3D" id="3.20.20.70">
    <property type="entry name" value="Aldolase class I"/>
    <property type="match status" value="1"/>
</dbReference>
<dbReference type="HAMAP" id="MF_00418">
    <property type="entry name" value="DapA"/>
    <property type="match status" value="1"/>
</dbReference>
<dbReference type="InterPro" id="IPR013785">
    <property type="entry name" value="Aldolase_TIM"/>
</dbReference>
<dbReference type="InterPro" id="IPR005263">
    <property type="entry name" value="DapA"/>
</dbReference>
<dbReference type="InterPro" id="IPR002220">
    <property type="entry name" value="DapA-like"/>
</dbReference>
<dbReference type="InterPro" id="IPR020625">
    <property type="entry name" value="Schiff_base-form_aldolases_AS"/>
</dbReference>
<dbReference type="InterPro" id="IPR020624">
    <property type="entry name" value="Schiff_base-form_aldolases_CS"/>
</dbReference>
<dbReference type="NCBIfam" id="TIGR00674">
    <property type="entry name" value="dapA"/>
    <property type="match status" value="1"/>
</dbReference>
<dbReference type="PANTHER" id="PTHR12128:SF66">
    <property type="entry name" value="4-HYDROXY-2-OXOGLUTARATE ALDOLASE, MITOCHONDRIAL"/>
    <property type="match status" value="1"/>
</dbReference>
<dbReference type="PANTHER" id="PTHR12128">
    <property type="entry name" value="DIHYDRODIPICOLINATE SYNTHASE"/>
    <property type="match status" value="1"/>
</dbReference>
<dbReference type="Pfam" id="PF00701">
    <property type="entry name" value="DHDPS"/>
    <property type="match status" value="1"/>
</dbReference>
<dbReference type="PIRSF" id="PIRSF001365">
    <property type="entry name" value="DHDPS"/>
    <property type="match status" value="1"/>
</dbReference>
<dbReference type="PRINTS" id="PR00146">
    <property type="entry name" value="DHPICSNTHASE"/>
</dbReference>
<dbReference type="SMART" id="SM01130">
    <property type="entry name" value="DHDPS"/>
    <property type="match status" value="1"/>
</dbReference>
<dbReference type="SUPFAM" id="SSF51569">
    <property type="entry name" value="Aldolase"/>
    <property type="match status" value="1"/>
</dbReference>
<dbReference type="PROSITE" id="PS00665">
    <property type="entry name" value="DHDPS_1"/>
    <property type="match status" value="1"/>
</dbReference>
<dbReference type="PROSITE" id="PS00666">
    <property type="entry name" value="DHDPS_2"/>
    <property type="match status" value="1"/>
</dbReference>
<accession>P63944</accession>
<accession>P58206</accession>
<reference key="1">
    <citation type="journal article" date="2001" name="Nature">
        <title>Genome sequence of enterohaemorrhagic Escherichia coli O157:H7.</title>
        <authorList>
            <person name="Perna N.T."/>
            <person name="Plunkett G. III"/>
            <person name="Burland V."/>
            <person name="Mau B."/>
            <person name="Glasner J.D."/>
            <person name="Rose D.J."/>
            <person name="Mayhew G.F."/>
            <person name="Evans P.S."/>
            <person name="Gregor J."/>
            <person name="Kirkpatrick H.A."/>
            <person name="Posfai G."/>
            <person name="Hackett J."/>
            <person name="Klink S."/>
            <person name="Boutin A."/>
            <person name="Shao Y."/>
            <person name="Miller L."/>
            <person name="Grotbeck E.J."/>
            <person name="Davis N.W."/>
            <person name="Lim A."/>
            <person name="Dimalanta E.T."/>
            <person name="Potamousis K."/>
            <person name="Apodaca J."/>
            <person name="Anantharaman T.S."/>
            <person name="Lin J."/>
            <person name="Yen G."/>
            <person name="Schwartz D.C."/>
            <person name="Welch R.A."/>
            <person name="Blattner F.R."/>
        </authorList>
    </citation>
    <scope>NUCLEOTIDE SEQUENCE [LARGE SCALE GENOMIC DNA]</scope>
    <source>
        <strain>O157:H7 / EDL933 / ATCC 700927 / EHEC</strain>
    </source>
</reference>
<reference key="2">
    <citation type="journal article" date="2001" name="DNA Res.">
        <title>Complete genome sequence of enterohemorrhagic Escherichia coli O157:H7 and genomic comparison with a laboratory strain K-12.</title>
        <authorList>
            <person name="Hayashi T."/>
            <person name="Makino K."/>
            <person name="Ohnishi M."/>
            <person name="Kurokawa K."/>
            <person name="Ishii K."/>
            <person name="Yokoyama K."/>
            <person name="Han C.-G."/>
            <person name="Ohtsubo E."/>
            <person name="Nakayama K."/>
            <person name="Murata T."/>
            <person name="Tanaka M."/>
            <person name="Tobe T."/>
            <person name="Iida T."/>
            <person name="Takami H."/>
            <person name="Honda T."/>
            <person name="Sasakawa C."/>
            <person name="Ogasawara N."/>
            <person name="Yasunaga T."/>
            <person name="Kuhara S."/>
            <person name="Shiba T."/>
            <person name="Hattori M."/>
            <person name="Shinagawa H."/>
        </authorList>
    </citation>
    <scope>NUCLEOTIDE SEQUENCE [LARGE SCALE GENOMIC DNA]</scope>
    <source>
        <strain>O157:H7 / Sakai / RIMD 0509952 / EHEC</strain>
    </source>
</reference>
<feature type="chain" id="PRO_0000103112" description="4-hydroxy-tetrahydrodipicolinate synthase">
    <location>
        <begin position="1"/>
        <end position="292"/>
    </location>
</feature>
<feature type="active site" description="Proton donor/acceptor" evidence="1">
    <location>
        <position position="133"/>
    </location>
</feature>
<feature type="active site" description="Schiff-base intermediate with substrate" evidence="1">
    <location>
        <position position="161"/>
    </location>
</feature>
<feature type="binding site" evidence="1">
    <location>
        <position position="45"/>
    </location>
    <ligand>
        <name>pyruvate</name>
        <dbReference type="ChEBI" id="CHEBI:15361"/>
    </ligand>
</feature>
<feature type="binding site" evidence="1">
    <location>
        <position position="203"/>
    </location>
    <ligand>
        <name>pyruvate</name>
        <dbReference type="ChEBI" id="CHEBI:15361"/>
    </ligand>
</feature>
<feature type="site" description="Part of a proton relay during catalysis" evidence="1">
    <location>
        <position position="44"/>
    </location>
</feature>
<feature type="site" description="Part of a proton relay during catalysis" evidence="1">
    <location>
        <position position="107"/>
    </location>
</feature>
<organism>
    <name type="scientific">Escherichia coli O157:H7</name>
    <dbReference type="NCBI Taxonomy" id="83334"/>
    <lineage>
        <taxon>Bacteria</taxon>
        <taxon>Pseudomonadati</taxon>
        <taxon>Pseudomonadota</taxon>
        <taxon>Gammaproteobacteria</taxon>
        <taxon>Enterobacterales</taxon>
        <taxon>Enterobacteriaceae</taxon>
        <taxon>Escherichia</taxon>
    </lineage>
</organism>
<proteinExistence type="inferred from homology"/>
<gene>
    <name evidence="1" type="primary">dapA</name>
    <name type="ordered locus">Z3737</name>
    <name type="ordered locus">ECs3340</name>
</gene>
<protein>
    <recommendedName>
        <fullName evidence="1">4-hydroxy-tetrahydrodipicolinate synthase</fullName>
        <shortName evidence="1">HTPA synthase</shortName>
        <ecNumber evidence="1">4.3.3.7</ecNumber>
    </recommendedName>
</protein>
<evidence type="ECO:0000255" key="1">
    <source>
        <dbReference type="HAMAP-Rule" id="MF_00418"/>
    </source>
</evidence>
<evidence type="ECO:0000305" key="2"/>